<keyword id="KW-0028">Amino-acid biosynthesis</keyword>
<keyword id="KW-0963">Cytoplasm</keyword>
<keyword id="KW-0315">Glutamine amidotransferase</keyword>
<keyword id="KW-0368">Histidine biosynthesis</keyword>
<keyword id="KW-0378">Hydrolase</keyword>
<keyword id="KW-0456">Lyase</keyword>
<dbReference type="EC" id="4.3.2.10" evidence="1"/>
<dbReference type="EC" id="3.5.1.2" evidence="1"/>
<dbReference type="EMBL" id="AE008384">
    <property type="protein sequence ID" value="AAM31726.1"/>
    <property type="status" value="ALT_INIT"/>
    <property type="molecule type" value="Genomic_DNA"/>
</dbReference>
<dbReference type="RefSeq" id="WP_048044721.1">
    <property type="nucleotide sequence ID" value="NC_003901.1"/>
</dbReference>
<dbReference type="SMR" id="Q8PVD5"/>
<dbReference type="MEROPS" id="C26.965"/>
<dbReference type="GeneID" id="82161086"/>
<dbReference type="KEGG" id="mma:MM_2030"/>
<dbReference type="PATRIC" id="fig|192952.21.peg.2331"/>
<dbReference type="eggNOG" id="arCOG00089">
    <property type="taxonomic scope" value="Archaea"/>
</dbReference>
<dbReference type="HOGENOM" id="CLU_071837_2_1_2"/>
<dbReference type="UniPathway" id="UPA00031">
    <property type="reaction ID" value="UER00010"/>
</dbReference>
<dbReference type="Proteomes" id="UP000000595">
    <property type="component" value="Chromosome"/>
</dbReference>
<dbReference type="GO" id="GO:0005737">
    <property type="term" value="C:cytoplasm"/>
    <property type="evidence" value="ECO:0007669"/>
    <property type="project" value="UniProtKB-SubCell"/>
</dbReference>
<dbReference type="GO" id="GO:0004359">
    <property type="term" value="F:glutaminase activity"/>
    <property type="evidence" value="ECO:0007669"/>
    <property type="project" value="UniProtKB-EC"/>
</dbReference>
<dbReference type="GO" id="GO:0000107">
    <property type="term" value="F:imidazoleglycerol-phosphate synthase activity"/>
    <property type="evidence" value="ECO:0007669"/>
    <property type="project" value="UniProtKB-UniRule"/>
</dbReference>
<dbReference type="GO" id="GO:0016829">
    <property type="term" value="F:lyase activity"/>
    <property type="evidence" value="ECO:0007669"/>
    <property type="project" value="UniProtKB-KW"/>
</dbReference>
<dbReference type="GO" id="GO:0000105">
    <property type="term" value="P:L-histidine biosynthetic process"/>
    <property type="evidence" value="ECO:0007669"/>
    <property type="project" value="UniProtKB-UniRule"/>
</dbReference>
<dbReference type="CDD" id="cd01748">
    <property type="entry name" value="GATase1_IGP_Synthase"/>
    <property type="match status" value="1"/>
</dbReference>
<dbReference type="FunFam" id="3.40.50.880:FF:000009">
    <property type="entry name" value="Imidazole glycerol phosphate synthase subunit HisH"/>
    <property type="match status" value="1"/>
</dbReference>
<dbReference type="Gene3D" id="3.40.50.880">
    <property type="match status" value="1"/>
</dbReference>
<dbReference type="HAMAP" id="MF_00278">
    <property type="entry name" value="HisH"/>
    <property type="match status" value="1"/>
</dbReference>
<dbReference type="InterPro" id="IPR029062">
    <property type="entry name" value="Class_I_gatase-like"/>
</dbReference>
<dbReference type="InterPro" id="IPR017926">
    <property type="entry name" value="GATASE"/>
</dbReference>
<dbReference type="InterPro" id="IPR010139">
    <property type="entry name" value="Imidazole-glycPsynth_HisH"/>
</dbReference>
<dbReference type="NCBIfam" id="TIGR01855">
    <property type="entry name" value="IMP_synth_hisH"/>
    <property type="match status" value="1"/>
</dbReference>
<dbReference type="PANTHER" id="PTHR42701">
    <property type="entry name" value="IMIDAZOLE GLYCEROL PHOSPHATE SYNTHASE SUBUNIT HISH"/>
    <property type="match status" value="1"/>
</dbReference>
<dbReference type="PANTHER" id="PTHR42701:SF1">
    <property type="entry name" value="IMIDAZOLE GLYCEROL PHOSPHATE SYNTHASE SUBUNIT HISH"/>
    <property type="match status" value="1"/>
</dbReference>
<dbReference type="Pfam" id="PF00117">
    <property type="entry name" value="GATase"/>
    <property type="match status" value="1"/>
</dbReference>
<dbReference type="PIRSF" id="PIRSF000495">
    <property type="entry name" value="Amidotransf_hisH"/>
    <property type="match status" value="1"/>
</dbReference>
<dbReference type="SMART" id="SM01211">
    <property type="entry name" value="GATase_5"/>
    <property type="match status" value="1"/>
</dbReference>
<dbReference type="SUPFAM" id="SSF52317">
    <property type="entry name" value="Class I glutamine amidotransferase-like"/>
    <property type="match status" value="1"/>
</dbReference>
<dbReference type="PROSITE" id="PS51273">
    <property type="entry name" value="GATASE_TYPE_1"/>
    <property type="match status" value="1"/>
</dbReference>
<organism>
    <name type="scientific">Methanosarcina mazei (strain ATCC BAA-159 / DSM 3647 / Goe1 / Go1 / JCM 11833 / OCM 88)</name>
    <name type="common">Methanosarcina frisia</name>
    <dbReference type="NCBI Taxonomy" id="192952"/>
    <lineage>
        <taxon>Archaea</taxon>
        <taxon>Methanobacteriati</taxon>
        <taxon>Methanobacteriota</taxon>
        <taxon>Stenosarchaea group</taxon>
        <taxon>Methanomicrobia</taxon>
        <taxon>Methanosarcinales</taxon>
        <taxon>Methanosarcinaceae</taxon>
        <taxon>Methanosarcina</taxon>
    </lineage>
</organism>
<accession>Q8PVD5</accession>
<comment type="function">
    <text evidence="1">IGPS catalyzes the conversion of PRFAR and glutamine to IGP, AICAR and glutamate. The HisH subunit catalyzes the hydrolysis of glutamine to glutamate and ammonia as part of the synthesis of IGP and AICAR. The resulting ammonia molecule is channeled to the active site of HisF.</text>
</comment>
<comment type="catalytic activity">
    <reaction evidence="1">
        <text>5-[(5-phospho-1-deoxy-D-ribulos-1-ylimino)methylamino]-1-(5-phospho-beta-D-ribosyl)imidazole-4-carboxamide + L-glutamine = D-erythro-1-(imidazol-4-yl)glycerol 3-phosphate + 5-amino-1-(5-phospho-beta-D-ribosyl)imidazole-4-carboxamide + L-glutamate + H(+)</text>
        <dbReference type="Rhea" id="RHEA:24793"/>
        <dbReference type="ChEBI" id="CHEBI:15378"/>
        <dbReference type="ChEBI" id="CHEBI:29985"/>
        <dbReference type="ChEBI" id="CHEBI:58278"/>
        <dbReference type="ChEBI" id="CHEBI:58359"/>
        <dbReference type="ChEBI" id="CHEBI:58475"/>
        <dbReference type="ChEBI" id="CHEBI:58525"/>
        <dbReference type="EC" id="4.3.2.10"/>
    </reaction>
</comment>
<comment type="catalytic activity">
    <reaction evidence="1">
        <text>L-glutamine + H2O = L-glutamate + NH4(+)</text>
        <dbReference type="Rhea" id="RHEA:15889"/>
        <dbReference type="ChEBI" id="CHEBI:15377"/>
        <dbReference type="ChEBI" id="CHEBI:28938"/>
        <dbReference type="ChEBI" id="CHEBI:29985"/>
        <dbReference type="ChEBI" id="CHEBI:58359"/>
        <dbReference type="EC" id="3.5.1.2"/>
    </reaction>
</comment>
<comment type="pathway">
    <text evidence="1">Amino-acid biosynthesis; L-histidine biosynthesis; L-histidine from 5-phospho-alpha-D-ribose 1-diphosphate: step 5/9.</text>
</comment>
<comment type="subunit">
    <text evidence="1">Heterodimer of HisH and HisF.</text>
</comment>
<comment type="subcellular location">
    <subcellularLocation>
        <location evidence="1">Cytoplasm</location>
    </subcellularLocation>
</comment>
<comment type="sequence caution" evidence="2">
    <conflict type="erroneous initiation">
        <sequence resource="EMBL-CDS" id="AAM31726"/>
    </conflict>
</comment>
<feature type="chain" id="PRO_0000152460" description="Imidazole glycerol phosphate synthase subunit HisH">
    <location>
        <begin position="1"/>
        <end position="202"/>
    </location>
</feature>
<feature type="domain" description="Glutamine amidotransferase type-1" evidence="1">
    <location>
        <begin position="3"/>
        <end position="202"/>
    </location>
</feature>
<feature type="active site" description="Nucleophile" evidence="1">
    <location>
        <position position="79"/>
    </location>
</feature>
<feature type="active site" evidence="1">
    <location>
        <position position="183"/>
    </location>
</feature>
<feature type="active site" evidence="1">
    <location>
        <position position="185"/>
    </location>
</feature>
<sequence>MKRIVIIDYGLGNLRSVQKGLEHAGASPAISGNPEEILAADGIILPGVGAFIDAMKCLVPLKKTIAEFAESGKPMLGICLGQQVLMSSSEEGRLTDGLDLIQGRVLRFPKSELKVPQMGWNNIRVKQDHPLFKGIPDGSFVYFVHSYYVDTAAENTLASCEYGLEYAASVVNSKGNVMGTQFHPEKSGATGLKILRNFVEMC</sequence>
<protein>
    <recommendedName>
        <fullName evidence="1">Imidazole glycerol phosphate synthase subunit HisH</fullName>
        <ecNumber evidence="1">4.3.2.10</ecNumber>
    </recommendedName>
    <alternativeName>
        <fullName evidence="1">IGP synthase glutaminase subunit</fullName>
        <ecNumber evidence="1">3.5.1.2</ecNumber>
    </alternativeName>
    <alternativeName>
        <fullName evidence="1">IGP synthase subunit HisH</fullName>
    </alternativeName>
    <alternativeName>
        <fullName evidence="1">ImGP synthase subunit HisH</fullName>
        <shortName evidence="1">IGPS subunit HisH</shortName>
    </alternativeName>
</protein>
<reference key="1">
    <citation type="journal article" date="2002" name="J. Mol. Microbiol. Biotechnol.">
        <title>The genome of Methanosarcina mazei: evidence for lateral gene transfer between Bacteria and Archaea.</title>
        <authorList>
            <person name="Deppenmeier U."/>
            <person name="Johann A."/>
            <person name="Hartsch T."/>
            <person name="Merkl R."/>
            <person name="Schmitz R.A."/>
            <person name="Martinez-Arias R."/>
            <person name="Henne A."/>
            <person name="Wiezer A."/>
            <person name="Baeumer S."/>
            <person name="Jacobi C."/>
            <person name="Brueggemann H."/>
            <person name="Lienard T."/>
            <person name="Christmann A."/>
            <person name="Boemecke M."/>
            <person name="Steckel S."/>
            <person name="Bhattacharyya A."/>
            <person name="Lykidis A."/>
            <person name="Overbeek R."/>
            <person name="Klenk H.-P."/>
            <person name="Gunsalus R.P."/>
            <person name="Fritz H.-J."/>
            <person name="Gottschalk G."/>
        </authorList>
    </citation>
    <scope>NUCLEOTIDE SEQUENCE [LARGE SCALE GENOMIC DNA]</scope>
    <source>
        <strain>ATCC BAA-159 / DSM 3647 / Goe1 / Go1 / JCM 11833 / OCM 88</strain>
    </source>
</reference>
<name>HIS5_METMA</name>
<gene>
    <name evidence="1" type="primary">hisH</name>
    <name type="ordered locus">MM_2030</name>
</gene>
<evidence type="ECO:0000255" key="1">
    <source>
        <dbReference type="HAMAP-Rule" id="MF_00278"/>
    </source>
</evidence>
<evidence type="ECO:0000305" key="2"/>
<proteinExistence type="inferred from homology"/>